<accession>Q0I2G3</accession>
<gene>
    <name evidence="1" type="primary">leuC</name>
    <name type="ordered locus">HS_0390</name>
</gene>
<name>LEUC_HISS1</name>
<sequence length="469" mass="50843">MKKTLYQKLFDSHIVHEAPGEVPILYINRHLIHEVTSPQAFDGLRVAGRQVRQVNKTFGTMDHSISTQVRDVNKLTGQAKIQVLELDKNCKATGISLFDMNSKQQGIVHVMGPEQGLTLPGMTIVCGDSHTATHGAFGALAFGIGTSEVEHVLATQTLKQARAKSMKIEVRGEVAKGITAKDIILAIIGKTTMAGGTGHVVEFCGEAIRALSMEGRMTVCNMAIEMGAKAGLIAPDETTFAYLKDRPYAPKGKDWESAVEYWKTLKTDEGAEFDTVVILDAKDIAPQVTWGTNPGQVIGIDQKVPNPAEMQDPVTKASAEKALAYIGLSPETDLKDISVDQVFIGSCTNSRIEDLRAAATVMKGRKKADNVKRVLVVPGSGLVKEQAEKEGLDKIFIAAGAEWRNPGCSMCLGMNDDRLGEWERCASTSNRNFEGRQGRNGRTHLVSPAMAAAAAVFGKFVDIRYMELN</sequence>
<protein>
    <recommendedName>
        <fullName evidence="1">3-isopropylmalate dehydratase large subunit</fullName>
        <ecNumber evidence="1">4.2.1.33</ecNumber>
    </recommendedName>
    <alternativeName>
        <fullName evidence="1">Alpha-IPM isomerase</fullName>
        <shortName evidence="1">IPMI</shortName>
    </alternativeName>
    <alternativeName>
        <fullName evidence="1">Isopropylmalate isomerase</fullName>
    </alternativeName>
</protein>
<keyword id="KW-0004">4Fe-4S</keyword>
<keyword id="KW-0028">Amino-acid biosynthesis</keyword>
<keyword id="KW-0100">Branched-chain amino acid biosynthesis</keyword>
<keyword id="KW-0408">Iron</keyword>
<keyword id="KW-0411">Iron-sulfur</keyword>
<keyword id="KW-0432">Leucine biosynthesis</keyword>
<keyword id="KW-0456">Lyase</keyword>
<keyword id="KW-0479">Metal-binding</keyword>
<evidence type="ECO:0000255" key="1">
    <source>
        <dbReference type="HAMAP-Rule" id="MF_01026"/>
    </source>
</evidence>
<comment type="function">
    <text evidence="1">Catalyzes the isomerization between 2-isopropylmalate and 3-isopropylmalate, via the formation of 2-isopropylmaleate.</text>
</comment>
<comment type="catalytic activity">
    <reaction evidence="1">
        <text>(2R,3S)-3-isopropylmalate = (2S)-2-isopropylmalate</text>
        <dbReference type="Rhea" id="RHEA:32287"/>
        <dbReference type="ChEBI" id="CHEBI:1178"/>
        <dbReference type="ChEBI" id="CHEBI:35121"/>
        <dbReference type="EC" id="4.2.1.33"/>
    </reaction>
</comment>
<comment type="cofactor">
    <cofactor evidence="1">
        <name>[4Fe-4S] cluster</name>
        <dbReference type="ChEBI" id="CHEBI:49883"/>
    </cofactor>
    <text evidence="1">Binds 1 [4Fe-4S] cluster per subunit.</text>
</comment>
<comment type="pathway">
    <text evidence="1">Amino-acid biosynthesis; L-leucine biosynthesis; L-leucine from 3-methyl-2-oxobutanoate: step 2/4.</text>
</comment>
<comment type="subunit">
    <text evidence="1">Heterodimer of LeuC and LeuD.</text>
</comment>
<comment type="similarity">
    <text evidence="1">Belongs to the aconitase/IPM isomerase family. LeuC type 1 subfamily.</text>
</comment>
<organism>
    <name type="scientific">Histophilus somni (strain 129Pt)</name>
    <name type="common">Haemophilus somnus</name>
    <dbReference type="NCBI Taxonomy" id="205914"/>
    <lineage>
        <taxon>Bacteria</taxon>
        <taxon>Pseudomonadati</taxon>
        <taxon>Pseudomonadota</taxon>
        <taxon>Gammaproteobacteria</taxon>
        <taxon>Pasteurellales</taxon>
        <taxon>Pasteurellaceae</taxon>
        <taxon>Histophilus</taxon>
    </lineage>
</organism>
<reference key="1">
    <citation type="journal article" date="2007" name="J. Bacteriol.">
        <title>Complete genome sequence of Haemophilus somnus (Histophilus somni) strain 129Pt and comparison to Haemophilus ducreyi 35000HP and Haemophilus influenzae Rd.</title>
        <authorList>
            <person name="Challacombe J.F."/>
            <person name="Duncan A.J."/>
            <person name="Brettin T.S."/>
            <person name="Bruce D."/>
            <person name="Chertkov O."/>
            <person name="Detter J.C."/>
            <person name="Han C.S."/>
            <person name="Misra M."/>
            <person name="Richardson P."/>
            <person name="Tapia R."/>
            <person name="Thayer N."/>
            <person name="Xie G."/>
            <person name="Inzana T.J."/>
        </authorList>
    </citation>
    <scope>NUCLEOTIDE SEQUENCE [LARGE SCALE GENOMIC DNA]</scope>
    <source>
        <strain>129Pt</strain>
    </source>
</reference>
<dbReference type="EC" id="4.2.1.33" evidence="1"/>
<dbReference type="EMBL" id="CP000436">
    <property type="protein sequence ID" value="ABI24668.1"/>
    <property type="molecule type" value="Genomic_DNA"/>
</dbReference>
<dbReference type="SMR" id="Q0I2G3"/>
<dbReference type="KEGG" id="hso:HS_0390"/>
<dbReference type="eggNOG" id="COG0065">
    <property type="taxonomic scope" value="Bacteria"/>
</dbReference>
<dbReference type="HOGENOM" id="CLU_006714_3_4_6"/>
<dbReference type="UniPathway" id="UPA00048">
    <property type="reaction ID" value="UER00071"/>
</dbReference>
<dbReference type="GO" id="GO:0003861">
    <property type="term" value="F:3-isopropylmalate dehydratase activity"/>
    <property type="evidence" value="ECO:0007669"/>
    <property type="project" value="UniProtKB-UniRule"/>
</dbReference>
<dbReference type="GO" id="GO:0051539">
    <property type="term" value="F:4 iron, 4 sulfur cluster binding"/>
    <property type="evidence" value="ECO:0007669"/>
    <property type="project" value="UniProtKB-KW"/>
</dbReference>
<dbReference type="GO" id="GO:0046872">
    <property type="term" value="F:metal ion binding"/>
    <property type="evidence" value="ECO:0007669"/>
    <property type="project" value="UniProtKB-KW"/>
</dbReference>
<dbReference type="GO" id="GO:0009098">
    <property type="term" value="P:L-leucine biosynthetic process"/>
    <property type="evidence" value="ECO:0007669"/>
    <property type="project" value="UniProtKB-UniRule"/>
</dbReference>
<dbReference type="CDD" id="cd01583">
    <property type="entry name" value="IPMI"/>
    <property type="match status" value="1"/>
</dbReference>
<dbReference type="FunFam" id="3.30.499.10:FF:000006">
    <property type="entry name" value="3-isopropylmalate dehydratase large subunit"/>
    <property type="match status" value="1"/>
</dbReference>
<dbReference type="FunFam" id="3.30.499.10:FF:000007">
    <property type="entry name" value="3-isopropylmalate dehydratase large subunit"/>
    <property type="match status" value="1"/>
</dbReference>
<dbReference type="Gene3D" id="3.30.499.10">
    <property type="entry name" value="Aconitase, domain 3"/>
    <property type="match status" value="2"/>
</dbReference>
<dbReference type="HAMAP" id="MF_01026">
    <property type="entry name" value="LeuC_type1"/>
    <property type="match status" value="1"/>
</dbReference>
<dbReference type="InterPro" id="IPR004430">
    <property type="entry name" value="3-IsopropMal_deHydase_lsu"/>
</dbReference>
<dbReference type="InterPro" id="IPR015931">
    <property type="entry name" value="Acnase/IPM_dHydase_lsu_aba_1/3"/>
</dbReference>
<dbReference type="InterPro" id="IPR001030">
    <property type="entry name" value="Acoase/IPM_deHydtase_lsu_aba"/>
</dbReference>
<dbReference type="InterPro" id="IPR018136">
    <property type="entry name" value="Aconitase_4Fe-4S_BS"/>
</dbReference>
<dbReference type="InterPro" id="IPR036008">
    <property type="entry name" value="Aconitase_4Fe-4S_dom"/>
</dbReference>
<dbReference type="InterPro" id="IPR050067">
    <property type="entry name" value="IPM_dehydratase_rel_enz"/>
</dbReference>
<dbReference type="InterPro" id="IPR033941">
    <property type="entry name" value="IPMI_cat"/>
</dbReference>
<dbReference type="NCBIfam" id="TIGR00170">
    <property type="entry name" value="leuC"/>
    <property type="match status" value="1"/>
</dbReference>
<dbReference type="NCBIfam" id="NF004016">
    <property type="entry name" value="PRK05478.1"/>
    <property type="match status" value="1"/>
</dbReference>
<dbReference type="NCBIfam" id="NF009116">
    <property type="entry name" value="PRK12466.1"/>
    <property type="match status" value="1"/>
</dbReference>
<dbReference type="PANTHER" id="PTHR43822:SF9">
    <property type="entry name" value="3-ISOPROPYLMALATE DEHYDRATASE"/>
    <property type="match status" value="1"/>
</dbReference>
<dbReference type="PANTHER" id="PTHR43822">
    <property type="entry name" value="HOMOACONITASE, MITOCHONDRIAL-RELATED"/>
    <property type="match status" value="1"/>
</dbReference>
<dbReference type="Pfam" id="PF00330">
    <property type="entry name" value="Aconitase"/>
    <property type="match status" value="1"/>
</dbReference>
<dbReference type="PRINTS" id="PR00415">
    <property type="entry name" value="ACONITASE"/>
</dbReference>
<dbReference type="SUPFAM" id="SSF53732">
    <property type="entry name" value="Aconitase iron-sulfur domain"/>
    <property type="match status" value="1"/>
</dbReference>
<dbReference type="PROSITE" id="PS00450">
    <property type="entry name" value="ACONITASE_1"/>
    <property type="match status" value="1"/>
</dbReference>
<dbReference type="PROSITE" id="PS01244">
    <property type="entry name" value="ACONITASE_2"/>
    <property type="match status" value="1"/>
</dbReference>
<proteinExistence type="inferred from homology"/>
<feature type="chain" id="PRO_1000063558" description="3-isopropylmalate dehydratase large subunit">
    <location>
        <begin position="1"/>
        <end position="469"/>
    </location>
</feature>
<feature type="binding site" evidence="1">
    <location>
        <position position="347"/>
    </location>
    <ligand>
        <name>[4Fe-4S] cluster</name>
        <dbReference type="ChEBI" id="CHEBI:49883"/>
    </ligand>
</feature>
<feature type="binding site" evidence="1">
    <location>
        <position position="408"/>
    </location>
    <ligand>
        <name>[4Fe-4S] cluster</name>
        <dbReference type="ChEBI" id="CHEBI:49883"/>
    </ligand>
</feature>
<feature type="binding site" evidence="1">
    <location>
        <position position="411"/>
    </location>
    <ligand>
        <name>[4Fe-4S] cluster</name>
        <dbReference type="ChEBI" id="CHEBI:49883"/>
    </ligand>
</feature>